<dbReference type="EC" id="2.4.2.10" evidence="1"/>
<dbReference type="EMBL" id="CR378663">
    <property type="protein sequence ID" value="CAG18638.1"/>
    <property type="molecule type" value="Genomic_DNA"/>
</dbReference>
<dbReference type="RefSeq" id="WP_011217015.1">
    <property type="nucleotide sequence ID" value="NC_006370.1"/>
</dbReference>
<dbReference type="SMR" id="Q6LVN7"/>
<dbReference type="STRING" id="298386.PBPRA0199"/>
<dbReference type="KEGG" id="ppr:PBPRA0199"/>
<dbReference type="eggNOG" id="COG0461">
    <property type="taxonomic scope" value="Bacteria"/>
</dbReference>
<dbReference type="HOGENOM" id="CLU_074878_0_1_6"/>
<dbReference type="UniPathway" id="UPA00070">
    <property type="reaction ID" value="UER00119"/>
</dbReference>
<dbReference type="Proteomes" id="UP000000593">
    <property type="component" value="Chromosome 1"/>
</dbReference>
<dbReference type="GO" id="GO:0005737">
    <property type="term" value="C:cytoplasm"/>
    <property type="evidence" value="ECO:0007669"/>
    <property type="project" value="TreeGrafter"/>
</dbReference>
<dbReference type="GO" id="GO:0000287">
    <property type="term" value="F:magnesium ion binding"/>
    <property type="evidence" value="ECO:0007669"/>
    <property type="project" value="UniProtKB-UniRule"/>
</dbReference>
<dbReference type="GO" id="GO:0004588">
    <property type="term" value="F:orotate phosphoribosyltransferase activity"/>
    <property type="evidence" value="ECO:0007669"/>
    <property type="project" value="UniProtKB-UniRule"/>
</dbReference>
<dbReference type="GO" id="GO:0006207">
    <property type="term" value="P:'de novo' pyrimidine nucleobase biosynthetic process"/>
    <property type="evidence" value="ECO:0007669"/>
    <property type="project" value="TreeGrafter"/>
</dbReference>
<dbReference type="GO" id="GO:0044205">
    <property type="term" value="P:'de novo' UMP biosynthetic process"/>
    <property type="evidence" value="ECO:0007669"/>
    <property type="project" value="UniProtKB-UniRule"/>
</dbReference>
<dbReference type="GO" id="GO:0046132">
    <property type="term" value="P:pyrimidine ribonucleoside biosynthetic process"/>
    <property type="evidence" value="ECO:0007669"/>
    <property type="project" value="TreeGrafter"/>
</dbReference>
<dbReference type="CDD" id="cd06223">
    <property type="entry name" value="PRTases_typeI"/>
    <property type="match status" value="1"/>
</dbReference>
<dbReference type="FunFam" id="3.40.50.2020:FF:000008">
    <property type="entry name" value="Orotate phosphoribosyltransferase"/>
    <property type="match status" value="1"/>
</dbReference>
<dbReference type="Gene3D" id="3.40.50.2020">
    <property type="match status" value="1"/>
</dbReference>
<dbReference type="HAMAP" id="MF_01208">
    <property type="entry name" value="PyrE"/>
    <property type="match status" value="1"/>
</dbReference>
<dbReference type="InterPro" id="IPR023031">
    <property type="entry name" value="OPRT"/>
</dbReference>
<dbReference type="InterPro" id="IPR004467">
    <property type="entry name" value="Or_phspho_trans_dom"/>
</dbReference>
<dbReference type="InterPro" id="IPR000836">
    <property type="entry name" value="PRibTrfase_dom"/>
</dbReference>
<dbReference type="InterPro" id="IPR029057">
    <property type="entry name" value="PRTase-like"/>
</dbReference>
<dbReference type="NCBIfam" id="TIGR00336">
    <property type="entry name" value="pyrE"/>
    <property type="match status" value="1"/>
</dbReference>
<dbReference type="PANTHER" id="PTHR46683">
    <property type="entry name" value="OROTATE PHOSPHORIBOSYLTRANSFERASE 1-RELATED"/>
    <property type="match status" value="1"/>
</dbReference>
<dbReference type="PANTHER" id="PTHR46683:SF1">
    <property type="entry name" value="OROTATE PHOSPHORIBOSYLTRANSFERASE 1-RELATED"/>
    <property type="match status" value="1"/>
</dbReference>
<dbReference type="Pfam" id="PF00156">
    <property type="entry name" value="Pribosyltran"/>
    <property type="match status" value="1"/>
</dbReference>
<dbReference type="SUPFAM" id="SSF53271">
    <property type="entry name" value="PRTase-like"/>
    <property type="match status" value="1"/>
</dbReference>
<dbReference type="PROSITE" id="PS00103">
    <property type="entry name" value="PUR_PYR_PR_TRANSFER"/>
    <property type="match status" value="1"/>
</dbReference>
<reference key="1">
    <citation type="journal article" date="2005" name="Science">
        <title>Life at depth: Photobacterium profundum genome sequence and expression analysis.</title>
        <authorList>
            <person name="Vezzi A."/>
            <person name="Campanaro S."/>
            <person name="D'Angelo M."/>
            <person name="Simonato F."/>
            <person name="Vitulo N."/>
            <person name="Lauro F.M."/>
            <person name="Cestaro A."/>
            <person name="Malacrida G."/>
            <person name="Simionati B."/>
            <person name="Cannata N."/>
            <person name="Romualdi C."/>
            <person name="Bartlett D.H."/>
            <person name="Valle G."/>
        </authorList>
    </citation>
    <scope>NUCLEOTIDE SEQUENCE [LARGE SCALE GENOMIC DNA]</scope>
    <source>
        <strain>ATCC BAA-1253 / SS9</strain>
    </source>
</reference>
<evidence type="ECO:0000255" key="1">
    <source>
        <dbReference type="HAMAP-Rule" id="MF_01208"/>
    </source>
</evidence>
<accession>Q6LVN7</accession>
<proteinExistence type="inferred from homology"/>
<comment type="function">
    <text evidence="1">Catalyzes the transfer of a ribosyl phosphate group from 5-phosphoribose 1-diphosphate to orotate, leading to the formation of orotidine monophosphate (OMP).</text>
</comment>
<comment type="catalytic activity">
    <reaction evidence="1">
        <text>orotidine 5'-phosphate + diphosphate = orotate + 5-phospho-alpha-D-ribose 1-diphosphate</text>
        <dbReference type="Rhea" id="RHEA:10380"/>
        <dbReference type="ChEBI" id="CHEBI:30839"/>
        <dbReference type="ChEBI" id="CHEBI:33019"/>
        <dbReference type="ChEBI" id="CHEBI:57538"/>
        <dbReference type="ChEBI" id="CHEBI:58017"/>
        <dbReference type="EC" id="2.4.2.10"/>
    </reaction>
</comment>
<comment type="cofactor">
    <cofactor evidence="1">
        <name>Mg(2+)</name>
        <dbReference type="ChEBI" id="CHEBI:18420"/>
    </cofactor>
</comment>
<comment type="pathway">
    <text evidence="1">Pyrimidine metabolism; UMP biosynthesis via de novo pathway; UMP from orotate: step 1/2.</text>
</comment>
<comment type="subunit">
    <text evidence="1">Homodimer.</text>
</comment>
<comment type="similarity">
    <text evidence="1">Belongs to the purine/pyrimidine phosphoribosyltransferase family. PyrE subfamily.</text>
</comment>
<organism>
    <name type="scientific">Photobacterium profundum (strain SS9)</name>
    <dbReference type="NCBI Taxonomy" id="298386"/>
    <lineage>
        <taxon>Bacteria</taxon>
        <taxon>Pseudomonadati</taxon>
        <taxon>Pseudomonadota</taxon>
        <taxon>Gammaproteobacteria</taxon>
        <taxon>Vibrionales</taxon>
        <taxon>Vibrionaceae</taxon>
        <taxon>Photobacterium</taxon>
    </lineage>
</organism>
<protein>
    <recommendedName>
        <fullName evidence="1">Orotate phosphoribosyltransferase</fullName>
        <shortName evidence="1">OPRT</shortName>
        <shortName evidence="1">OPRTase</shortName>
        <ecNumber evidence="1">2.4.2.10</ecNumber>
    </recommendedName>
</protein>
<feature type="chain" id="PRO_0000110720" description="Orotate phosphoribosyltransferase">
    <location>
        <begin position="1"/>
        <end position="213"/>
    </location>
</feature>
<feature type="binding site" description="in other chain" evidence="1">
    <location>
        <position position="26"/>
    </location>
    <ligand>
        <name>5-phospho-alpha-D-ribose 1-diphosphate</name>
        <dbReference type="ChEBI" id="CHEBI:58017"/>
        <note>ligand shared between dimeric partners</note>
    </ligand>
</feature>
<feature type="binding site" evidence="1">
    <location>
        <begin position="34"/>
        <end position="35"/>
    </location>
    <ligand>
        <name>orotate</name>
        <dbReference type="ChEBI" id="CHEBI:30839"/>
    </ligand>
</feature>
<feature type="binding site" description="in other chain" evidence="1">
    <location>
        <begin position="72"/>
        <end position="73"/>
    </location>
    <ligand>
        <name>5-phospho-alpha-D-ribose 1-diphosphate</name>
        <dbReference type="ChEBI" id="CHEBI:58017"/>
        <note>ligand shared between dimeric partners</note>
    </ligand>
</feature>
<feature type="binding site" evidence="1">
    <location>
        <position position="99"/>
    </location>
    <ligand>
        <name>5-phospho-alpha-D-ribose 1-diphosphate</name>
        <dbReference type="ChEBI" id="CHEBI:58017"/>
        <note>ligand shared between dimeric partners</note>
    </ligand>
</feature>
<feature type="binding site" description="in other chain" evidence="1">
    <location>
        <position position="100"/>
    </location>
    <ligand>
        <name>5-phospho-alpha-D-ribose 1-diphosphate</name>
        <dbReference type="ChEBI" id="CHEBI:58017"/>
        <note>ligand shared between dimeric partners</note>
    </ligand>
</feature>
<feature type="binding site" evidence="1">
    <location>
        <position position="103"/>
    </location>
    <ligand>
        <name>5-phospho-alpha-D-ribose 1-diphosphate</name>
        <dbReference type="ChEBI" id="CHEBI:58017"/>
        <note>ligand shared between dimeric partners</note>
    </ligand>
</feature>
<feature type="binding site" evidence="1">
    <location>
        <position position="105"/>
    </location>
    <ligand>
        <name>5-phospho-alpha-D-ribose 1-diphosphate</name>
        <dbReference type="ChEBI" id="CHEBI:58017"/>
        <note>ligand shared between dimeric partners</note>
    </ligand>
</feature>
<feature type="binding site" description="in other chain" evidence="1">
    <location>
        <begin position="124"/>
        <end position="132"/>
    </location>
    <ligand>
        <name>5-phospho-alpha-D-ribose 1-diphosphate</name>
        <dbReference type="ChEBI" id="CHEBI:58017"/>
        <note>ligand shared between dimeric partners</note>
    </ligand>
</feature>
<feature type="binding site" evidence="1">
    <location>
        <position position="128"/>
    </location>
    <ligand>
        <name>orotate</name>
        <dbReference type="ChEBI" id="CHEBI:30839"/>
    </ligand>
</feature>
<feature type="binding site" evidence="1">
    <location>
        <position position="156"/>
    </location>
    <ligand>
        <name>orotate</name>
        <dbReference type="ChEBI" id="CHEBI:30839"/>
    </ligand>
</feature>
<name>PYRE_PHOPR</name>
<keyword id="KW-0328">Glycosyltransferase</keyword>
<keyword id="KW-0460">Magnesium</keyword>
<keyword id="KW-0665">Pyrimidine biosynthesis</keyword>
<keyword id="KW-1185">Reference proteome</keyword>
<keyword id="KW-0808">Transferase</keyword>
<sequence>MKAYQRQFIEFALEKGVLKFGEFTLKSGRVSPYFFNAGLFNTGRDLARLGRFYAEALVDAGIDYDVLFGPAYKGIPIATTTAVALADHHDIDMPYCFNRKEVKTHGEGGSLVGSDLEGRIMLVDDVITAGTAIRESMEIIKANGADLAGVLVAIDRQEKGKGELSAIQEVERDFGCAVISIVSLGDVVTYLSEQDGMDAHLAAVKSYRAEYGV</sequence>
<gene>
    <name evidence="1" type="primary">pyrE</name>
    <name type="ordered locus">PBPRA0199</name>
</gene>